<organism>
    <name type="scientific">Thermus thermophilus (strain ATCC 27634 / DSM 579 / HB8)</name>
    <dbReference type="NCBI Taxonomy" id="300852"/>
    <lineage>
        <taxon>Bacteria</taxon>
        <taxon>Thermotogati</taxon>
        <taxon>Deinococcota</taxon>
        <taxon>Deinococci</taxon>
        <taxon>Thermales</taxon>
        <taxon>Thermaceae</taxon>
        <taxon>Thermus</taxon>
    </lineage>
</organism>
<reference key="1">
    <citation type="submission" date="2004-11" db="EMBL/GenBank/DDBJ databases">
        <title>Complete genome sequence of Thermus thermophilus HB8.</title>
        <authorList>
            <person name="Masui R."/>
            <person name="Kurokawa K."/>
            <person name="Nakagawa N."/>
            <person name="Tokunaga F."/>
            <person name="Koyama Y."/>
            <person name="Shibata T."/>
            <person name="Oshima T."/>
            <person name="Yokoyama S."/>
            <person name="Yasunaga T."/>
            <person name="Kuramitsu S."/>
        </authorList>
    </citation>
    <scope>NUCLEOTIDE SEQUENCE [LARGE SCALE GENOMIC DNA]</scope>
    <source>
        <strain>ATCC 27634 / DSM 579 / HB8</strain>
    </source>
</reference>
<feature type="chain" id="PRO_0000225854" description="UPF0145 protein TTHA1944">
    <location>
        <begin position="1"/>
        <end position="114"/>
    </location>
</feature>
<protein>
    <recommendedName>
        <fullName evidence="1">UPF0145 protein TTHA1944</fullName>
    </recommendedName>
</protein>
<keyword id="KW-1185">Reference proteome</keyword>
<sequence>MGVMEILVSTLEAVPGYRVAQVLGVVKGSTVRSKHLGKDLLAGLRTLVGGELPEYTEMLQEAREVAEARMLEEARRLGAHAVLGVRYATASVMQGAAEILVYGTAVRLEPAREV</sequence>
<comment type="similarity">
    <text evidence="1">Belongs to the UPF0145 family.</text>
</comment>
<name>Y1944_THET8</name>
<proteinExistence type="inferred from homology"/>
<evidence type="ECO:0000255" key="1">
    <source>
        <dbReference type="HAMAP-Rule" id="MF_00338"/>
    </source>
</evidence>
<accession>Q5SGY6</accession>
<gene>
    <name type="ordered locus">TTHA1944</name>
</gene>
<dbReference type="EMBL" id="AP008226">
    <property type="protein sequence ID" value="BAD71767.1"/>
    <property type="molecule type" value="Genomic_DNA"/>
</dbReference>
<dbReference type="RefSeq" id="WP_011229035.1">
    <property type="nucleotide sequence ID" value="NC_006461.1"/>
</dbReference>
<dbReference type="RefSeq" id="YP_145210.1">
    <property type="nucleotide sequence ID" value="NC_006461.1"/>
</dbReference>
<dbReference type="SMR" id="Q5SGY6"/>
<dbReference type="EnsemblBacteria" id="BAD71767">
    <property type="protein sequence ID" value="BAD71767"/>
    <property type="gene ID" value="BAD71767"/>
</dbReference>
<dbReference type="GeneID" id="3168729"/>
<dbReference type="KEGG" id="ttj:TTHA1944"/>
<dbReference type="PATRIC" id="fig|300852.9.peg.1915"/>
<dbReference type="eggNOG" id="COG0393">
    <property type="taxonomic scope" value="Bacteria"/>
</dbReference>
<dbReference type="HOGENOM" id="CLU_117144_1_2_0"/>
<dbReference type="PhylomeDB" id="Q5SGY6"/>
<dbReference type="Proteomes" id="UP000000532">
    <property type="component" value="Chromosome"/>
</dbReference>
<dbReference type="Gene3D" id="3.30.110.70">
    <property type="entry name" value="Hypothetical protein apc22750. Chain B"/>
    <property type="match status" value="1"/>
</dbReference>
<dbReference type="HAMAP" id="MF_00338">
    <property type="entry name" value="UPF0145"/>
    <property type="match status" value="1"/>
</dbReference>
<dbReference type="InterPro" id="IPR035439">
    <property type="entry name" value="UPF0145_dom_sf"/>
</dbReference>
<dbReference type="InterPro" id="IPR002765">
    <property type="entry name" value="UPF0145_YbjQ-like"/>
</dbReference>
<dbReference type="PANTHER" id="PTHR34068:SF2">
    <property type="entry name" value="UPF0145 PROTEIN SCO3412"/>
    <property type="match status" value="1"/>
</dbReference>
<dbReference type="PANTHER" id="PTHR34068">
    <property type="entry name" value="UPF0145 PROTEIN YBJQ"/>
    <property type="match status" value="1"/>
</dbReference>
<dbReference type="Pfam" id="PF01906">
    <property type="entry name" value="YbjQ_1"/>
    <property type="match status" value="1"/>
</dbReference>
<dbReference type="SUPFAM" id="SSF117782">
    <property type="entry name" value="YbjQ-like"/>
    <property type="match status" value="1"/>
</dbReference>